<reference key="1">
    <citation type="submission" date="2005-10" db="EMBL/GenBank/DDBJ databases">
        <title>Complete sequence of chromosome 3 of Burkholderia sp. 383.</title>
        <authorList>
            <consortium name="US DOE Joint Genome Institute"/>
            <person name="Copeland A."/>
            <person name="Lucas S."/>
            <person name="Lapidus A."/>
            <person name="Barry K."/>
            <person name="Detter J.C."/>
            <person name="Glavina T."/>
            <person name="Hammon N."/>
            <person name="Israni S."/>
            <person name="Pitluck S."/>
            <person name="Chain P."/>
            <person name="Malfatti S."/>
            <person name="Shin M."/>
            <person name="Vergez L."/>
            <person name="Schmutz J."/>
            <person name="Larimer F."/>
            <person name="Land M."/>
            <person name="Kyrpides N."/>
            <person name="Lykidis A."/>
            <person name="Richardson P."/>
        </authorList>
    </citation>
    <scope>NUCLEOTIDE SEQUENCE [LARGE SCALE GENOMIC DNA]</scope>
    <source>
        <strain>ATCC 17760 / DSM 23089 / LMG 22485 / NCIMB 9086 / R18194 / 383</strain>
    </source>
</reference>
<name>ACDH4_BURL3</name>
<dbReference type="EC" id="1.2.1.10" evidence="1"/>
<dbReference type="EMBL" id="CP000150">
    <property type="protein sequence ID" value="ABB06689.1"/>
    <property type="molecule type" value="Genomic_DNA"/>
</dbReference>
<dbReference type="SMR" id="Q39LH7"/>
<dbReference type="KEGG" id="bur:Bcep18194_C7645"/>
<dbReference type="PATRIC" id="fig|482957.22.peg.8261"/>
<dbReference type="HOGENOM" id="CLU_062208_0_0_4"/>
<dbReference type="Proteomes" id="UP000002705">
    <property type="component" value="Chromosome 3"/>
</dbReference>
<dbReference type="GO" id="GO:0008774">
    <property type="term" value="F:acetaldehyde dehydrogenase (acetylating) activity"/>
    <property type="evidence" value="ECO:0007669"/>
    <property type="project" value="UniProtKB-UniRule"/>
</dbReference>
<dbReference type="GO" id="GO:0051287">
    <property type="term" value="F:NAD binding"/>
    <property type="evidence" value="ECO:0007669"/>
    <property type="project" value="UniProtKB-UniRule"/>
</dbReference>
<dbReference type="GO" id="GO:0009056">
    <property type="term" value="P:catabolic process"/>
    <property type="evidence" value="ECO:0007669"/>
    <property type="project" value="UniProtKB-KW"/>
</dbReference>
<dbReference type="CDD" id="cd23933">
    <property type="entry name" value="ALDH_C"/>
    <property type="match status" value="1"/>
</dbReference>
<dbReference type="Gene3D" id="3.30.360.10">
    <property type="entry name" value="Dihydrodipicolinate Reductase, domain 2"/>
    <property type="match status" value="1"/>
</dbReference>
<dbReference type="Gene3D" id="3.40.50.720">
    <property type="entry name" value="NAD(P)-binding Rossmann-like Domain"/>
    <property type="match status" value="1"/>
</dbReference>
<dbReference type="HAMAP" id="MF_01657">
    <property type="entry name" value="Ac_ald_DH_ac"/>
    <property type="match status" value="1"/>
</dbReference>
<dbReference type="InterPro" id="IPR003361">
    <property type="entry name" value="Acetaldehyde_dehydrogenase"/>
</dbReference>
<dbReference type="InterPro" id="IPR015426">
    <property type="entry name" value="Acetylaldehyde_DH_C"/>
</dbReference>
<dbReference type="InterPro" id="IPR036291">
    <property type="entry name" value="NAD(P)-bd_dom_sf"/>
</dbReference>
<dbReference type="InterPro" id="IPR000534">
    <property type="entry name" value="Semialdehyde_DH_NAD-bd"/>
</dbReference>
<dbReference type="NCBIfam" id="TIGR03215">
    <property type="entry name" value="ac_ald_DH_ac"/>
    <property type="match status" value="1"/>
</dbReference>
<dbReference type="NCBIfam" id="NF006157">
    <property type="entry name" value="PRK08300.1"/>
    <property type="match status" value="1"/>
</dbReference>
<dbReference type="Pfam" id="PF09290">
    <property type="entry name" value="AcetDehyd-dimer"/>
    <property type="match status" value="1"/>
</dbReference>
<dbReference type="Pfam" id="PF01118">
    <property type="entry name" value="Semialdhyde_dh"/>
    <property type="match status" value="1"/>
</dbReference>
<dbReference type="PIRSF" id="PIRSF015689">
    <property type="entry name" value="Actaldh_dh_actl"/>
    <property type="match status" value="1"/>
</dbReference>
<dbReference type="SMART" id="SM00859">
    <property type="entry name" value="Semialdhyde_dh"/>
    <property type="match status" value="1"/>
</dbReference>
<dbReference type="SUPFAM" id="SSF55347">
    <property type="entry name" value="Glyceraldehyde-3-phosphate dehydrogenase-like, C-terminal domain"/>
    <property type="match status" value="1"/>
</dbReference>
<dbReference type="SUPFAM" id="SSF51735">
    <property type="entry name" value="NAD(P)-binding Rossmann-fold domains"/>
    <property type="match status" value="1"/>
</dbReference>
<organism>
    <name type="scientific">Burkholderia lata (strain ATCC 17760 / DSM 23089 / LMG 22485 / NCIMB 9086 / R18194 / 383)</name>
    <dbReference type="NCBI Taxonomy" id="482957"/>
    <lineage>
        <taxon>Bacteria</taxon>
        <taxon>Pseudomonadati</taxon>
        <taxon>Pseudomonadota</taxon>
        <taxon>Betaproteobacteria</taxon>
        <taxon>Burkholderiales</taxon>
        <taxon>Burkholderiaceae</taxon>
        <taxon>Burkholderia</taxon>
        <taxon>Burkholderia cepacia complex</taxon>
    </lineage>
</organism>
<gene>
    <name type="ordered locus">Bcep18194_C7645</name>
</gene>
<accession>Q39LH7</accession>
<evidence type="ECO:0000255" key="1">
    <source>
        <dbReference type="HAMAP-Rule" id="MF_01657"/>
    </source>
</evidence>
<proteinExistence type="inferred from homology"/>
<protein>
    <recommendedName>
        <fullName evidence="1">Acetaldehyde dehydrogenase 4</fullName>
        <ecNumber evidence="1">1.2.1.10</ecNumber>
    </recommendedName>
    <alternativeName>
        <fullName evidence="1">Acetaldehyde dehydrogenase [acetylating] 4</fullName>
    </alternativeName>
</protein>
<sequence length="314" mass="32651">MMKDLDKLAVAIIGSGNIGTDLMIKVLRHAKHLDVAAMVGIDPASDGLARAARLGVPTTAGGIDGLVAMPGFADVRIAFDATSAGAHARHAEVLGRHGVQVIDLTPAAIGPFVVPVVNLFEHLDAPNLNMVTCGGQATIPIVHAVSRVAPVHYAEIVASISSRSAGPGTRANIDEFTETTSKAIETVGGAARGKAIIVLNPAEPPLMMRDTVYCLTDEDADTAAIEHSIRTMVDAVASYVPGYRLKQAVQFDRYTAAQPLAFDAGERRAGLKVSVFLEVEGAAHYLPSYAGNLDIMTSAALAAAEQIAASRVAA</sequence>
<comment type="catalytic activity">
    <reaction evidence="1">
        <text>acetaldehyde + NAD(+) + CoA = acetyl-CoA + NADH + H(+)</text>
        <dbReference type="Rhea" id="RHEA:23288"/>
        <dbReference type="ChEBI" id="CHEBI:15343"/>
        <dbReference type="ChEBI" id="CHEBI:15378"/>
        <dbReference type="ChEBI" id="CHEBI:57287"/>
        <dbReference type="ChEBI" id="CHEBI:57288"/>
        <dbReference type="ChEBI" id="CHEBI:57540"/>
        <dbReference type="ChEBI" id="CHEBI:57945"/>
        <dbReference type="EC" id="1.2.1.10"/>
    </reaction>
</comment>
<comment type="similarity">
    <text evidence="1">Belongs to the acetaldehyde dehydrogenase family.</text>
</comment>
<keyword id="KW-0058">Aromatic hydrocarbons catabolism</keyword>
<keyword id="KW-0520">NAD</keyword>
<keyword id="KW-0560">Oxidoreductase</keyword>
<feature type="chain" id="PRO_0000387641" description="Acetaldehyde dehydrogenase 4">
    <location>
        <begin position="1"/>
        <end position="314"/>
    </location>
</feature>
<feature type="active site" description="Acyl-thioester intermediate" evidence="1">
    <location>
        <position position="133"/>
    </location>
</feature>
<feature type="binding site" evidence="1">
    <location>
        <begin position="15"/>
        <end position="18"/>
    </location>
    <ligand>
        <name>NAD(+)</name>
        <dbReference type="ChEBI" id="CHEBI:57540"/>
    </ligand>
</feature>
<feature type="binding site" evidence="1">
    <location>
        <begin position="164"/>
        <end position="172"/>
    </location>
    <ligand>
        <name>NAD(+)</name>
        <dbReference type="ChEBI" id="CHEBI:57540"/>
    </ligand>
</feature>
<feature type="binding site" evidence="1">
    <location>
        <position position="292"/>
    </location>
    <ligand>
        <name>NAD(+)</name>
        <dbReference type="ChEBI" id="CHEBI:57540"/>
    </ligand>
</feature>